<organism>
    <name type="scientific">Buchnera aphidicola subsp. Baizongia pistaciae (strain Bp)</name>
    <dbReference type="NCBI Taxonomy" id="224915"/>
    <lineage>
        <taxon>Bacteria</taxon>
        <taxon>Pseudomonadati</taxon>
        <taxon>Pseudomonadota</taxon>
        <taxon>Gammaproteobacteria</taxon>
        <taxon>Enterobacterales</taxon>
        <taxon>Erwiniaceae</taxon>
        <taxon>Buchnera</taxon>
    </lineage>
</organism>
<proteinExistence type="inferred from homology"/>
<feature type="chain" id="PRO_0000068700" description="Bifunctional protein GlmU">
    <location>
        <begin position="1"/>
        <end position="448"/>
    </location>
</feature>
<feature type="region of interest" description="Pyrophosphorylase" evidence="1">
    <location>
        <begin position="1"/>
        <end position="229"/>
    </location>
</feature>
<feature type="region of interest" description="Linker" evidence="1">
    <location>
        <begin position="230"/>
        <end position="250"/>
    </location>
</feature>
<feature type="region of interest" description="N-acetyltransferase" evidence="1">
    <location>
        <begin position="251"/>
        <end position="448"/>
    </location>
</feature>
<feature type="active site" description="Proton acceptor" evidence="1">
    <location>
        <position position="363"/>
    </location>
</feature>
<feature type="binding site" evidence="1">
    <location>
        <begin position="11"/>
        <end position="14"/>
    </location>
    <ligand>
        <name>UDP-N-acetyl-alpha-D-glucosamine</name>
        <dbReference type="ChEBI" id="CHEBI:57705"/>
    </ligand>
</feature>
<feature type="binding site" evidence="1">
    <location>
        <position position="25"/>
    </location>
    <ligand>
        <name>UDP-N-acetyl-alpha-D-glucosamine</name>
        <dbReference type="ChEBI" id="CHEBI:57705"/>
    </ligand>
</feature>
<feature type="binding site" evidence="1">
    <location>
        <position position="76"/>
    </location>
    <ligand>
        <name>UDP-N-acetyl-alpha-D-glucosamine</name>
        <dbReference type="ChEBI" id="CHEBI:57705"/>
    </ligand>
</feature>
<feature type="binding site" evidence="1">
    <location>
        <begin position="81"/>
        <end position="82"/>
    </location>
    <ligand>
        <name>UDP-N-acetyl-alpha-D-glucosamine</name>
        <dbReference type="ChEBI" id="CHEBI:57705"/>
    </ligand>
</feature>
<feature type="binding site" evidence="1">
    <location>
        <begin position="103"/>
        <end position="105"/>
    </location>
    <ligand>
        <name>UDP-N-acetyl-alpha-D-glucosamine</name>
        <dbReference type="ChEBI" id="CHEBI:57705"/>
    </ligand>
</feature>
<feature type="binding site" evidence="1">
    <location>
        <position position="105"/>
    </location>
    <ligand>
        <name>Mg(2+)</name>
        <dbReference type="ChEBI" id="CHEBI:18420"/>
    </ligand>
</feature>
<feature type="binding site" evidence="1">
    <location>
        <position position="140"/>
    </location>
    <ligand>
        <name>UDP-N-acetyl-alpha-D-glucosamine</name>
        <dbReference type="ChEBI" id="CHEBI:57705"/>
    </ligand>
</feature>
<feature type="binding site" evidence="1">
    <location>
        <position position="154"/>
    </location>
    <ligand>
        <name>UDP-N-acetyl-alpha-D-glucosamine</name>
        <dbReference type="ChEBI" id="CHEBI:57705"/>
    </ligand>
</feature>
<feature type="binding site" evidence="1">
    <location>
        <position position="169"/>
    </location>
    <ligand>
        <name>UDP-N-acetyl-alpha-D-glucosamine</name>
        <dbReference type="ChEBI" id="CHEBI:57705"/>
    </ligand>
</feature>
<feature type="binding site" evidence="1">
    <location>
        <position position="227"/>
    </location>
    <ligand>
        <name>Mg(2+)</name>
        <dbReference type="ChEBI" id="CHEBI:18420"/>
    </ligand>
</feature>
<feature type="binding site" evidence="1">
    <location>
        <position position="227"/>
    </location>
    <ligand>
        <name>UDP-N-acetyl-alpha-D-glucosamine</name>
        <dbReference type="ChEBI" id="CHEBI:57705"/>
    </ligand>
</feature>
<feature type="binding site" evidence="1">
    <location>
        <position position="351"/>
    </location>
    <ligand>
        <name>UDP-N-acetyl-alpha-D-glucosamine</name>
        <dbReference type="ChEBI" id="CHEBI:57705"/>
    </ligand>
</feature>
<feature type="binding site" evidence="1">
    <location>
        <position position="366"/>
    </location>
    <ligand>
        <name>UDP-N-acetyl-alpha-D-glucosamine</name>
        <dbReference type="ChEBI" id="CHEBI:57705"/>
    </ligand>
</feature>
<feature type="binding site" evidence="1">
    <location>
        <position position="377"/>
    </location>
    <ligand>
        <name>UDP-N-acetyl-alpha-D-glucosamine</name>
        <dbReference type="ChEBI" id="CHEBI:57705"/>
    </ligand>
</feature>
<feature type="binding site" evidence="1">
    <location>
        <position position="380"/>
    </location>
    <ligand>
        <name>acetyl-CoA</name>
        <dbReference type="ChEBI" id="CHEBI:57288"/>
    </ligand>
</feature>
<feature type="binding site" evidence="1">
    <location>
        <begin position="386"/>
        <end position="387"/>
    </location>
    <ligand>
        <name>acetyl-CoA</name>
        <dbReference type="ChEBI" id="CHEBI:57288"/>
    </ligand>
</feature>
<feature type="binding site" evidence="1">
    <location>
        <position position="405"/>
    </location>
    <ligand>
        <name>acetyl-CoA</name>
        <dbReference type="ChEBI" id="CHEBI:57288"/>
    </ligand>
</feature>
<feature type="binding site" evidence="1">
    <location>
        <position position="423"/>
    </location>
    <ligand>
        <name>acetyl-CoA</name>
        <dbReference type="ChEBI" id="CHEBI:57288"/>
    </ligand>
</feature>
<accession>Q89B26</accession>
<keyword id="KW-0012">Acyltransferase</keyword>
<keyword id="KW-0133">Cell shape</keyword>
<keyword id="KW-0961">Cell wall biogenesis/degradation</keyword>
<keyword id="KW-0963">Cytoplasm</keyword>
<keyword id="KW-0460">Magnesium</keyword>
<keyword id="KW-0479">Metal-binding</keyword>
<keyword id="KW-0511">Multifunctional enzyme</keyword>
<keyword id="KW-0548">Nucleotidyltransferase</keyword>
<keyword id="KW-0573">Peptidoglycan synthesis</keyword>
<keyword id="KW-1185">Reference proteome</keyword>
<keyword id="KW-0677">Repeat</keyword>
<keyword id="KW-0808">Transferase</keyword>
<gene>
    <name evidence="1" type="primary">glmU</name>
    <name type="ordered locus">bbp_029</name>
</gene>
<name>GLMU_BUCBP</name>
<reference key="1">
    <citation type="journal article" date="2003" name="Proc. Natl. Acad. Sci. U.S.A.">
        <title>Reductive genome evolution in Buchnera aphidicola.</title>
        <authorList>
            <person name="van Ham R.C.H.J."/>
            <person name="Kamerbeek J."/>
            <person name="Palacios C."/>
            <person name="Rausell C."/>
            <person name="Abascal F."/>
            <person name="Bastolla U."/>
            <person name="Fernandez J.M."/>
            <person name="Jimenez L."/>
            <person name="Postigo M."/>
            <person name="Silva F.J."/>
            <person name="Tamames J."/>
            <person name="Viguera E."/>
            <person name="Latorre A."/>
            <person name="Valencia A."/>
            <person name="Moran F."/>
            <person name="Moya A."/>
        </authorList>
    </citation>
    <scope>NUCLEOTIDE SEQUENCE [LARGE SCALE GENOMIC DNA]</scope>
    <source>
        <strain>Bp</strain>
    </source>
</reference>
<evidence type="ECO:0000255" key="1">
    <source>
        <dbReference type="HAMAP-Rule" id="MF_01631"/>
    </source>
</evidence>
<dbReference type="EC" id="2.7.7.23" evidence="1"/>
<dbReference type="EC" id="2.3.1.157" evidence="1"/>
<dbReference type="EMBL" id="AE016826">
    <property type="protein sequence ID" value="AAO26772.1"/>
    <property type="molecule type" value="Genomic_DNA"/>
</dbReference>
<dbReference type="RefSeq" id="WP_011091173.1">
    <property type="nucleotide sequence ID" value="NC_004545.1"/>
</dbReference>
<dbReference type="SMR" id="Q89B26"/>
<dbReference type="STRING" id="224915.bbp_029"/>
<dbReference type="KEGG" id="bab:bbp_029"/>
<dbReference type="eggNOG" id="COG1207">
    <property type="taxonomic scope" value="Bacteria"/>
</dbReference>
<dbReference type="HOGENOM" id="CLU_029499_15_2_6"/>
<dbReference type="OrthoDB" id="9775031at2"/>
<dbReference type="UniPathway" id="UPA00113">
    <property type="reaction ID" value="UER00532"/>
</dbReference>
<dbReference type="UniPathway" id="UPA00113">
    <property type="reaction ID" value="UER00533"/>
</dbReference>
<dbReference type="UniPathway" id="UPA00973"/>
<dbReference type="Proteomes" id="UP000000601">
    <property type="component" value="Chromosome"/>
</dbReference>
<dbReference type="GO" id="GO:0005737">
    <property type="term" value="C:cytoplasm"/>
    <property type="evidence" value="ECO:0007669"/>
    <property type="project" value="UniProtKB-SubCell"/>
</dbReference>
<dbReference type="GO" id="GO:0016020">
    <property type="term" value="C:membrane"/>
    <property type="evidence" value="ECO:0007669"/>
    <property type="project" value="GOC"/>
</dbReference>
<dbReference type="GO" id="GO:0019134">
    <property type="term" value="F:glucosamine-1-phosphate N-acetyltransferase activity"/>
    <property type="evidence" value="ECO:0007669"/>
    <property type="project" value="UniProtKB-UniRule"/>
</dbReference>
<dbReference type="GO" id="GO:0000287">
    <property type="term" value="F:magnesium ion binding"/>
    <property type="evidence" value="ECO:0007669"/>
    <property type="project" value="UniProtKB-UniRule"/>
</dbReference>
<dbReference type="GO" id="GO:0003977">
    <property type="term" value="F:UDP-N-acetylglucosamine diphosphorylase activity"/>
    <property type="evidence" value="ECO:0007669"/>
    <property type="project" value="UniProtKB-UniRule"/>
</dbReference>
<dbReference type="GO" id="GO:0000902">
    <property type="term" value="P:cell morphogenesis"/>
    <property type="evidence" value="ECO:0007669"/>
    <property type="project" value="UniProtKB-UniRule"/>
</dbReference>
<dbReference type="GO" id="GO:0071555">
    <property type="term" value="P:cell wall organization"/>
    <property type="evidence" value="ECO:0007669"/>
    <property type="project" value="UniProtKB-KW"/>
</dbReference>
<dbReference type="GO" id="GO:0009245">
    <property type="term" value="P:lipid A biosynthetic process"/>
    <property type="evidence" value="ECO:0007669"/>
    <property type="project" value="UniProtKB-UniRule"/>
</dbReference>
<dbReference type="GO" id="GO:0009252">
    <property type="term" value="P:peptidoglycan biosynthetic process"/>
    <property type="evidence" value="ECO:0007669"/>
    <property type="project" value="UniProtKB-UniRule"/>
</dbReference>
<dbReference type="GO" id="GO:0008360">
    <property type="term" value="P:regulation of cell shape"/>
    <property type="evidence" value="ECO:0007669"/>
    <property type="project" value="UniProtKB-KW"/>
</dbReference>
<dbReference type="GO" id="GO:0006048">
    <property type="term" value="P:UDP-N-acetylglucosamine biosynthetic process"/>
    <property type="evidence" value="ECO:0007669"/>
    <property type="project" value="UniProtKB-UniPathway"/>
</dbReference>
<dbReference type="CDD" id="cd02540">
    <property type="entry name" value="GT2_GlmU_N_bac"/>
    <property type="match status" value="1"/>
</dbReference>
<dbReference type="CDD" id="cd03353">
    <property type="entry name" value="LbH_GlmU_C"/>
    <property type="match status" value="1"/>
</dbReference>
<dbReference type="Gene3D" id="2.160.10.10">
    <property type="entry name" value="Hexapeptide repeat proteins"/>
    <property type="match status" value="1"/>
</dbReference>
<dbReference type="Gene3D" id="3.90.550.10">
    <property type="entry name" value="Spore Coat Polysaccharide Biosynthesis Protein SpsA, Chain A"/>
    <property type="match status" value="1"/>
</dbReference>
<dbReference type="HAMAP" id="MF_01631">
    <property type="entry name" value="GlmU"/>
    <property type="match status" value="1"/>
</dbReference>
<dbReference type="InterPro" id="IPR005882">
    <property type="entry name" value="Bifunctional_GlmU"/>
</dbReference>
<dbReference type="InterPro" id="IPR050065">
    <property type="entry name" value="GlmU-like"/>
</dbReference>
<dbReference type="InterPro" id="IPR038009">
    <property type="entry name" value="GlmU_C_LbH"/>
</dbReference>
<dbReference type="InterPro" id="IPR001451">
    <property type="entry name" value="Hexapep"/>
</dbReference>
<dbReference type="InterPro" id="IPR025877">
    <property type="entry name" value="MobA-like_NTP_Trfase"/>
</dbReference>
<dbReference type="InterPro" id="IPR029044">
    <property type="entry name" value="Nucleotide-diphossugar_trans"/>
</dbReference>
<dbReference type="InterPro" id="IPR011004">
    <property type="entry name" value="Trimer_LpxA-like_sf"/>
</dbReference>
<dbReference type="NCBIfam" id="TIGR01173">
    <property type="entry name" value="glmU"/>
    <property type="match status" value="1"/>
</dbReference>
<dbReference type="PANTHER" id="PTHR43584:SF3">
    <property type="entry name" value="BIFUNCTIONAL PROTEIN GLMU"/>
    <property type="match status" value="1"/>
</dbReference>
<dbReference type="PANTHER" id="PTHR43584">
    <property type="entry name" value="NUCLEOTIDYL TRANSFERASE"/>
    <property type="match status" value="1"/>
</dbReference>
<dbReference type="Pfam" id="PF00132">
    <property type="entry name" value="Hexapep"/>
    <property type="match status" value="1"/>
</dbReference>
<dbReference type="Pfam" id="PF12804">
    <property type="entry name" value="NTP_transf_3"/>
    <property type="match status" value="1"/>
</dbReference>
<dbReference type="SUPFAM" id="SSF53448">
    <property type="entry name" value="Nucleotide-diphospho-sugar transferases"/>
    <property type="match status" value="1"/>
</dbReference>
<dbReference type="SUPFAM" id="SSF51161">
    <property type="entry name" value="Trimeric LpxA-like enzymes"/>
    <property type="match status" value="1"/>
</dbReference>
<comment type="function">
    <text evidence="1">Catalyzes the last two sequential reactions in the de novo biosynthetic pathway for UDP-N-acetylglucosamine (UDP-GlcNAc). The C-terminal domain catalyzes the transfer of acetyl group from acetyl coenzyme A to glucosamine-1-phosphate (GlcN-1-P) to produce N-acetylglucosamine-1-phosphate (GlcNAc-1-P), which is converted into UDP-GlcNAc by the transfer of uridine 5-monophosphate (from uridine 5-triphosphate), a reaction catalyzed by the N-terminal domain.</text>
</comment>
<comment type="catalytic activity">
    <reaction evidence="1">
        <text>alpha-D-glucosamine 1-phosphate + acetyl-CoA = N-acetyl-alpha-D-glucosamine 1-phosphate + CoA + H(+)</text>
        <dbReference type="Rhea" id="RHEA:13725"/>
        <dbReference type="ChEBI" id="CHEBI:15378"/>
        <dbReference type="ChEBI" id="CHEBI:57287"/>
        <dbReference type="ChEBI" id="CHEBI:57288"/>
        <dbReference type="ChEBI" id="CHEBI:57776"/>
        <dbReference type="ChEBI" id="CHEBI:58516"/>
        <dbReference type="EC" id="2.3.1.157"/>
    </reaction>
</comment>
<comment type="catalytic activity">
    <reaction evidence="1">
        <text>N-acetyl-alpha-D-glucosamine 1-phosphate + UTP + H(+) = UDP-N-acetyl-alpha-D-glucosamine + diphosphate</text>
        <dbReference type="Rhea" id="RHEA:13509"/>
        <dbReference type="ChEBI" id="CHEBI:15378"/>
        <dbReference type="ChEBI" id="CHEBI:33019"/>
        <dbReference type="ChEBI" id="CHEBI:46398"/>
        <dbReference type="ChEBI" id="CHEBI:57705"/>
        <dbReference type="ChEBI" id="CHEBI:57776"/>
        <dbReference type="EC" id="2.7.7.23"/>
    </reaction>
</comment>
<comment type="cofactor">
    <cofactor evidence="1">
        <name>Mg(2+)</name>
        <dbReference type="ChEBI" id="CHEBI:18420"/>
    </cofactor>
    <text evidence="1">Binds 1 Mg(2+) ion per subunit.</text>
</comment>
<comment type="pathway">
    <text evidence="1">Nucleotide-sugar biosynthesis; UDP-N-acetyl-alpha-D-glucosamine biosynthesis; N-acetyl-alpha-D-glucosamine 1-phosphate from alpha-D-glucosamine 6-phosphate (route II): step 2/2.</text>
</comment>
<comment type="pathway">
    <text evidence="1">Nucleotide-sugar biosynthesis; UDP-N-acetyl-alpha-D-glucosamine biosynthesis; UDP-N-acetyl-alpha-D-glucosamine from N-acetyl-alpha-D-glucosamine 1-phosphate: step 1/1.</text>
</comment>
<comment type="pathway">
    <text evidence="1">Bacterial outer membrane biogenesis; LPS lipid A biosynthesis.</text>
</comment>
<comment type="subunit">
    <text evidence="1">Homotrimer.</text>
</comment>
<comment type="subcellular location">
    <subcellularLocation>
        <location evidence="1">Cytoplasm</location>
    </subcellularLocation>
</comment>
<comment type="similarity">
    <text evidence="1">In the N-terminal section; belongs to the N-acetylglucosamine-1-phosphate uridyltransferase family.</text>
</comment>
<comment type="similarity">
    <text evidence="1">In the C-terminal section; belongs to the transferase hexapeptide repeat family.</text>
</comment>
<protein>
    <recommendedName>
        <fullName evidence="1">Bifunctional protein GlmU</fullName>
    </recommendedName>
    <domain>
        <recommendedName>
            <fullName evidence="1">UDP-N-acetylglucosamine pyrophosphorylase</fullName>
            <ecNumber evidence="1">2.7.7.23</ecNumber>
        </recommendedName>
        <alternativeName>
            <fullName evidence="1">N-acetylglucosamine-1-phosphate uridyltransferase</fullName>
        </alternativeName>
    </domain>
    <domain>
        <recommendedName>
            <fullName evidence="1">Glucosamine-1-phosphate N-acetyltransferase</fullName>
            <ecNumber evidence="1">2.3.1.157</ecNumber>
        </recommendedName>
    </domain>
</protein>
<sequence>MNNHTLNIIILAAGKGTRMQFDHPKLLHLLGGKPILEHVINLAQSLCPKTITVIYNKQYKKFKIKNKNNSITWIKQKKILGTGNAISQIINNYKDHENILILYGDVPLISKNSIQKMLLKKKNSTITLLTAKLNNPEEYGRIIRKNKKIVKIIEYKDATDEQLNIKEVNSGILIVSSTNLKKWIFQIHAKNNQNEYYITDIISLANKDNHKINSVRPEKNDEIQGINNLLQLVRAEKIYQKQQAKLLLLSGIMIYNPSNFSLRGTLKHGKNIKIDHGVILEGSVKIGNSVIIEPGCIIKNSTIGNNCTIKAYSIIEKTIISNKCIVGPFTHLQHGTVLKNNTHVGNFVEIKKTTLGSYSKAKHLSYLGNSQIGQKVNIGAGTVTCNYNGKKKLDTIIGDNVFIGSSTQLIAPINIKKGTIIAAGTTVMKNIHEPSLVYNEKKQIHKKL</sequence>